<proteinExistence type="inferred from homology"/>
<accession>P59352</accession>
<evidence type="ECO:0000255" key="1">
    <source>
        <dbReference type="HAMAP-Rule" id="MF_01232"/>
    </source>
</evidence>
<evidence type="ECO:0000256" key="2">
    <source>
        <dbReference type="SAM" id="MobiDB-lite"/>
    </source>
</evidence>
<protein>
    <recommendedName>
        <fullName evidence="1">UPF0229 protein SO_2883</fullName>
    </recommendedName>
</protein>
<feature type="chain" id="PRO_0000068206" description="UPF0229 protein SO_2883">
    <location>
        <begin position="1"/>
        <end position="422"/>
    </location>
</feature>
<feature type="region of interest" description="Disordered" evidence="2">
    <location>
        <begin position="60"/>
        <end position="111"/>
    </location>
</feature>
<feature type="compositionally biased region" description="Basic and acidic residues" evidence="2">
    <location>
        <begin position="70"/>
        <end position="90"/>
    </location>
</feature>
<dbReference type="EMBL" id="AE014299">
    <property type="protein sequence ID" value="AAN55899.1"/>
    <property type="molecule type" value="Genomic_DNA"/>
</dbReference>
<dbReference type="RefSeq" id="NP_718455.1">
    <property type="nucleotide sequence ID" value="NC_004347.2"/>
</dbReference>
<dbReference type="RefSeq" id="WP_011072794.1">
    <property type="nucleotide sequence ID" value="NC_004347.2"/>
</dbReference>
<dbReference type="SMR" id="P59352"/>
<dbReference type="STRING" id="211586.SO_2883"/>
<dbReference type="PaxDb" id="211586-SO_2883"/>
<dbReference type="KEGG" id="son:SO_2883"/>
<dbReference type="PATRIC" id="fig|211586.12.peg.2782"/>
<dbReference type="eggNOG" id="COG2718">
    <property type="taxonomic scope" value="Bacteria"/>
</dbReference>
<dbReference type="HOGENOM" id="CLU_049702_0_0_6"/>
<dbReference type="OrthoDB" id="9788289at2"/>
<dbReference type="PhylomeDB" id="P59352"/>
<dbReference type="BioCyc" id="SONE211586:G1GMP-2661-MONOMER"/>
<dbReference type="Proteomes" id="UP000008186">
    <property type="component" value="Chromosome"/>
</dbReference>
<dbReference type="HAMAP" id="MF_01232">
    <property type="entry name" value="UPF0229"/>
    <property type="match status" value="1"/>
</dbReference>
<dbReference type="InterPro" id="IPR006698">
    <property type="entry name" value="UPF0229"/>
</dbReference>
<dbReference type="NCBIfam" id="NF003707">
    <property type="entry name" value="PRK05325.1-2"/>
    <property type="match status" value="1"/>
</dbReference>
<dbReference type="NCBIfam" id="NF003708">
    <property type="entry name" value="PRK05325.1-3"/>
    <property type="match status" value="1"/>
</dbReference>
<dbReference type="PANTHER" id="PTHR30510">
    <property type="entry name" value="UPF0229 PROTEIN YEAH"/>
    <property type="match status" value="1"/>
</dbReference>
<dbReference type="PANTHER" id="PTHR30510:SF2">
    <property type="entry name" value="UPF0229 PROTEIN YEAH"/>
    <property type="match status" value="1"/>
</dbReference>
<dbReference type="Pfam" id="PF04285">
    <property type="entry name" value="DUF444"/>
    <property type="match status" value="1"/>
</dbReference>
<name>Y2883_SHEON</name>
<comment type="similarity">
    <text evidence="1">Belongs to the UPF0229 family.</text>
</comment>
<sequence length="422" mass="48563">MANFIDRRLNAKGKSTVNRQRFINRYKQQIKKAVSDAVTRRSVTDVDKGEKISIPTRDISEPMFHQGKGGVRDRVHPGNDQFTRGDKIDRPQGGSGGGAGKGDASDSGEGNDDFVFEISKDEYLELLFEDLELPNLQKNRLNKLVEYQIYRAGFTNDGVPANINIVRSLRSSLARRIAMSASKKKLLKESEQELAELENIPGTKAELILDLKAQIEELKRKIAKVPFIDTFDLRFNNFSRREVPSSQAVMFCLMDVSGSMDQATKDMAKRFYILLYLFLTRTYKNLEVVYIRHHTQAKEVDEHEFFYSQETGGTIVSSALKLMHEIQQARYPADEWNIYAAQASDGDNWADDSPTCKQLLEQKILPLVRYFSYIEITNRAHQTLWREYESLQQHYDNIAVQHIRQAEDIYPVFRELFKKQAV</sequence>
<reference key="1">
    <citation type="journal article" date="2002" name="Nat. Biotechnol.">
        <title>Genome sequence of the dissimilatory metal ion-reducing bacterium Shewanella oneidensis.</title>
        <authorList>
            <person name="Heidelberg J.F."/>
            <person name="Paulsen I.T."/>
            <person name="Nelson K.E."/>
            <person name="Gaidos E.J."/>
            <person name="Nelson W.C."/>
            <person name="Read T.D."/>
            <person name="Eisen J.A."/>
            <person name="Seshadri R."/>
            <person name="Ward N.L."/>
            <person name="Methe B.A."/>
            <person name="Clayton R.A."/>
            <person name="Meyer T."/>
            <person name="Tsapin A."/>
            <person name="Scott J."/>
            <person name="Beanan M.J."/>
            <person name="Brinkac L.M."/>
            <person name="Daugherty S.C."/>
            <person name="DeBoy R.T."/>
            <person name="Dodson R.J."/>
            <person name="Durkin A.S."/>
            <person name="Haft D.H."/>
            <person name="Kolonay J.F."/>
            <person name="Madupu R."/>
            <person name="Peterson J.D."/>
            <person name="Umayam L.A."/>
            <person name="White O."/>
            <person name="Wolf A.M."/>
            <person name="Vamathevan J.J."/>
            <person name="Weidman J.F."/>
            <person name="Impraim M."/>
            <person name="Lee K."/>
            <person name="Berry K.J."/>
            <person name="Lee C."/>
            <person name="Mueller J."/>
            <person name="Khouri H.M."/>
            <person name="Gill J."/>
            <person name="Utterback T.R."/>
            <person name="McDonald L.A."/>
            <person name="Feldblyum T.V."/>
            <person name="Smith H.O."/>
            <person name="Venter J.C."/>
            <person name="Nealson K.H."/>
            <person name="Fraser C.M."/>
        </authorList>
    </citation>
    <scope>NUCLEOTIDE SEQUENCE [LARGE SCALE GENOMIC DNA]</scope>
    <source>
        <strain>ATCC 700550 / JCM 31522 / CIP 106686 / LMG 19005 / NCIMB 14063 / MR-1</strain>
    </source>
</reference>
<keyword id="KW-1185">Reference proteome</keyword>
<organism>
    <name type="scientific">Shewanella oneidensis (strain ATCC 700550 / JCM 31522 / CIP 106686 / LMG 19005 / NCIMB 14063 / MR-1)</name>
    <dbReference type="NCBI Taxonomy" id="211586"/>
    <lineage>
        <taxon>Bacteria</taxon>
        <taxon>Pseudomonadati</taxon>
        <taxon>Pseudomonadota</taxon>
        <taxon>Gammaproteobacteria</taxon>
        <taxon>Alteromonadales</taxon>
        <taxon>Shewanellaceae</taxon>
        <taxon>Shewanella</taxon>
    </lineage>
</organism>
<gene>
    <name type="ordered locus">SO_2883</name>
</gene>